<proteinExistence type="evidence at protein level"/>
<name>NU3C_SYNY3</name>
<keyword id="KW-0903">Direct protein sequencing</keyword>
<keyword id="KW-0472">Membrane</keyword>
<keyword id="KW-0520">NAD</keyword>
<keyword id="KW-0521">NADP</keyword>
<keyword id="KW-0618">Plastoquinone</keyword>
<keyword id="KW-0874">Quinone</keyword>
<keyword id="KW-1185">Reference proteome</keyword>
<keyword id="KW-0793">Thylakoid</keyword>
<keyword id="KW-1278">Translocase</keyword>
<keyword id="KW-0812">Transmembrane</keyword>
<keyword id="KW-1133">Transmembrane helix</keyword>
<keyword id="KW-0813">Transport</keyword>
<dbReference type="EC" id="7.1.1.-"/>
<dbReference type="EMBL" id="X17439">
    <property type="protein sequence ID" value="CAA35484.1"/>
    <property type="molecule type" value="Genomic_DNA"/>
</dbReference>
<dbReference type="EMBL" id="BA000022">
    <property type="protein sequence ID" value="BAA18283.1"/>
    <property type="molecule type" value="Genomic_DNA"/>
</dbReference>
<dbReference type="PIR" id="S04435">
    <property type="entry name" value="S04435"/>
</dbReference>
<dbReference type="SMR" id="P19045"/>
<dbReference type="IntAct" id="P19045">
    <property type="interactions" value="3"/>
</dbReference>
<dbReference type="STRING" id="1148.gene:10499159"/>
<dbReference type="PaxDb" id="1148-1653369"/>
<dbReference type="EnsemblBacteria" id="BAA18283">
    <property type="protein sequence ID" value="BAA18283"/>
    <property type="gene ID" value="BAA18283"/>
</dbReference>
<dbReference type="KEGG" id="syn:slr1279"/>
<dbReference type="eggNOG" id="COG0838">
    <property type="taxonomic scope" value="Bacteria"/>
</dbReference>
<dbReference type="InParanoid" id="P19045"/>
<dbReference type="PhylomeDB" id="P19045"/>
<dbReference type="Proteomes" id="UP000001425">
    <property type="component" value="Chromosome"/>
</dbReference>
<dbReference type="GO" id="GO:0030964">
    <property type="term" value="C:NADH dehydrogenase complex"/>
    <property type="evidence" value="ECO:0000318"/>
    <property type="project" value="GO_Central"/>
</dbReference>
<dbReference type="GO" id="GO:0031676">
    <property type="term" value="C:plasma membrane-derived thylakoid membrane"/>
    <property type="evidence" value="ECO:0007669"/>
    <property type="project" value="UniProtKB-SubCell"/>
</dbReference>
<dbReference type="GO" id="GO:0008137">
    <property type="term" value="F:NADH dehydrogenase (ubiquinone) activity"/>
    <property type="evidence" value="ECO:0000318"/>
    <property type="project" value="GO_Central"/>
</dbReference>
<dbReference type="GO" id="GO:0048038">
    <property type="term" value="F:quinone binding"/>
    <property type="evidence" value="ECO:0007669"/>
    <property type="project" value="UniProtKB-KW"/>
</dbReference>
<dbReference type="GO" id="GO:0019684">
    <property type="term" value="P:photosynthesis, light reaction"/>
    <property type="evidence" value="ECO:0007669"/>
    <property type="project" value="UniProtKB-UniRule"/>
</dbReference>
<dbReference type="FunFam" id="1.20.58.1610:FF:000001">
    <property type="entry name" value="NAD(P)H-quinone oxidoreductase subunit 3, chloroplastic"/>
    <property type="match status" value="1"/>
</dbReference>
<dbReference type="Gene3D" id="1.20.58.1610">
    <property type="entry name" value="NADH:ubiquinone/plastoquinone oxidoreductase, chain 3"/>
    <property type="match status" value="1"/>
</dbReference>
<dbReference type="HAMAP" id="MF_01394">
    <property type="entry name" value="NDH1_NuoA"/>
    <property type="match status" value="1"/>
</dbReference>
<dbReference type="InterPro" id="IPR023043">
    <property type="entry name" value="NAD(P)H_OxRDtase_bac/plastid"/>
</dbReference>
<dbReference type="InterPro" id="IPR000440">
    <property type="entry name" value="NADH_UbQ/plastoQ_OxRdtase_su3"/>
</dbReference>
<dbReference type="InterPro" id="IPR038430">
    <property type="entry name" value="NDAH_ubi_oxred_su3_sf"/>
</dbReference>
<dbReference type="PANTHER" id="PTHR11058">
    <property type="entry name" value="NADH-UBIQUINONE OXIDOREDUCTASE CHAIN 3"/>
    <property type="match status" value="1"/>
</dbReference>
<dbReference type="PANTHER" id="PTHR11058:SF9">
    <property type="entry name" value="NADH-UBIQUINONE OXIDOREDUCTASE CHAIN 3"/>
    <property type="match status" value="1"/>
</dbReference>
<dbReference type="Pfam" id="PF00507">
    <property type="entry name" value="Oxidored_q4"/>
    <property type="match status" value="1"/>
</dbReference>
<accession>P19045</accession>
<sequence length="120" mass="13662">MFVLTGYEYFLGFLFICSLVPVLALTASKLLRPRDGGPERQTTYESGMEPIGGAWIQFNIRYYMFALVFVVFDVETVFLYPWAVAFNQLGLLAFVEALIFIAILVVALVYAWRKGALEWS</sequence>
<organism>
    <name type="scientific">Synechocystis sp. (strain ATCC 27184 / PCC 6803 / Kazusa)</name>
    <dbReference type="NCBI Taxonomy" id="1111708"/>
    <lineage>
        <taxon>Bacteria</taxon>
        <taxon>Bacillati</taxon>
        <taxon>Cyanobacteriota</taxon>
        <taxon>Cyanophyceae</taxon>
        <taxon>Synechococcales</taxon>
        <taxon>Merismopediaceae</taxon>
        <taxon>Synechocystis</taxon>
    </lineage>
</organism>
<feature type="chain" id="PRO_0000117859" description="NAD(P)H-quinone oxidoreductase subunit 3">
    <location>
        <begin position="1"/>
        <end position="120"/>
    </location>
</feature>
<feature type="transmembrane region" description="Helical" evidence="2">
    <location>
        <begin position="2"/>
        <end position="22"/>
    </location>
</feature>
<feature type="transmembrane region" description="Helical" evidence="2">
    <location>
        <begin position="64"/>
        <end position="84"/>
    </location>
</feature>
<feature type="transmembrane region" description="Helical" evidence="2">
    <location>
        <begin position="89"/>
        <end position="109"/>
    </location>
</feature>
<gene>
    <name type="primary">ndhC</name>
    <name type="ordered locus">slr1279</name>
</gene>
<evidence type="ECO:0000250" key="1"/>
<evidence type="ECO:0000255" key="2"/>
<evidence type="ECO:0000305" key="3"/>
<comment type="function">
    <text evidence="1">NDH-1 shuttles electrons from an unknown electron donor, via FMN and iron-sulfur (Fe-S) centers, to quinones in the respiratory and/or the photosynthetic chain. The immediate electron acceptor for the enzyme in this species is believed to be plastoquinone. Couples the redox reaction to proton translocation, and thus conserves the redox energy in a proton gradient. Cyanobacterial NDH-1 also plays a role in inorganic carbon-concentration (By similarity).</text>
</comment>
<comment type="catalytic activity">
    <reaction>
        <text>a plastoquinone + NADH + (n+1) H(+)(in) = a plastoquinol + NAD(+) + n H(+)(out)</text>
        <dbReference type="Rhea" id="RHEA:42608"/>
        <dbReference type="Rhea" id="RHEA-COMP:9561"/>
        <dbReference type="Rhea" id="RHEA-COMP:9562"/>
        <dbReference type="ChEBI" id="CHEBI:15378"/>
        <dbReference type="ChEBI" id="CHEBI:17757"/>
        <dbReference type="ChEBI" id="CHEBI:57540"/>
        <dbReference type="ChEBI" id="CHEBI:57945"/>
        <dbReference type="ChEBI" id="CHEBI:62192"/>
    </reaction>
</comment>
<comment type="catalytic activity">
    <reaction>
        <text>a plastoquinone + NADPH + (n+1) H(+)(in) = a plastoquinol + NADP(+) + n H(+)(out)</text>
        <dbReference type="Rhea" id="RHEA:42612"/>
        <dbReference type="Rhea" id="RHEA-COMP:9561"/>
        <dbReference type="Rhea" id="RHEA-COMP:9562"/>
        <dbReference type="ChEBI" id="CHEBI:15378"/>
        <dbReference type="ChEBI" id="CHEBI:17757"/>
        <dbReference type="ChEBI" id="CHEBI:57783"/>
        <dbReference type="ChEBI" id="CHEBI:58349"/>
        <dbReference type="ChEBI" id="CHEBI:62192"/>
    </reaction>
</comment>
<comment type="subunit">
    <text>NDH-1 can be composed of about 15 different subunits; different subcomplexes with different compositions have been identified which probably have different functions.</text>
</comment>
<comment type="subcellular location">
    <subcellularLocation>
        <location evidence="3">Cellular thylakoid membrane</location>
        <topology evidence="3">Multi-pass membrane protein</topology>
    </subcellularLocation>
</comment>
<comment type="similarity">
    <text evidence="3">Belongs to the complex I subunit 3 family.</text>
</comment>
<reference key="1">
    <citation type="journal article" date="1989" name="Mol. Gen. Genet.">
        <title>Characterization of the ndhC-psbG-ORF157/159 operon of maize plastid DNA and of the cyanobacterium Synechocystis sp. PCC6803.</title>
        <authorList>
            <person name="Steinmueller K."/>
            <person name="Ley A.C."/>
            <person name="Steinmetz A.A."/>
            <person name="Sayre R.T."/>
            <person name="Bogorad L."/>
        </authorList>
    </citation>
    <scope>NUCLEOTIDE SEQUENCE [GENOMIC DNA]</scope>
</reference>
<reference key="2">
    <citation type="journal article" date="1996" name="DNA Res.">
        <title>Sequence analysis of the genome of the unicellular cyanobacterium Synechocystis sp. strain PCC6803. II. Sequence determination of the entire genome and assignment of potential protein-coding regions.</title>
        <authorList>
            <person name="Kaneko T."/>
            <person name="Sato S."/>
            <person name="Kotani H."/>
            <person name="Tanaka A."/>
            <person name="Asamizu E."/>
            <person name="Nakamura Y."/>
            <person name="Miyajima N."/>
            <person name="Hirosawa M."/>
            <person name="Sugiura M."/>
            <person name="Sasamoto S."/>
            <person name="Kimura T."/>
            <person name="Hosouchi T."/>
            <person name="Matsuno A."/>
            <person name="Muraki A."/>
            <person name="Nakazaki N."/>
            <person name="Naruo K."/>
            <person name="Okumura S."/>
            <person name="Shimpo S."/>
            <person name="Takeuchi C."/>
            <person name="Wada T."/>
            <person name="Watanabe A."/>
            <person name="Yamada M."/>
            <person name="Yasuda M."/>
            <person name="Tabata S."/>
        </authorList>
    </citation>
    <scope>NUCLEOTIDE SEQUENCE [LARGE SCALE GENOMIC DNA]</scope>
    <source>
        <strain>ATCC 27184 / PCC 6803 / Kazusa</strain>
    </source>
</reference>
<reference key="3">
    <citation type="journal article" date="2004" name="J. Biol. Chem.">
        <title>Subunit composition of NDH-1 complexes of Synechocystis sp. PCC 6803: identification of two new ndh gene products with nuclear-encoded homologues in the chloroplast Ndh complex.</title>
        <authorList>
            <person name="Prommeenate P."/>
            <person name="Lennon A.M."/>
            <person name="Markert C."/>
            <person name="Hippler M."/>
            <person name="Nixon P.J."/>
        </authorList>
    </citation>
    <scope>PROTEIN SEQUENCE OF 1-6</scope>
    <scope>CHARACTERIZATION AS A MEMBER OF THE NAD(P)H-QUINONE OXIDOREDUCTASE COMPLEX</scope>
    <scope>SUBCOMPLEXES OF NDH-1</scope>
</reference>
<reference key="4">
    <citation type="journal article" date="2005" name="J. Biol. Chem.">
        <title>Identification of NdhL and Ssl1690 (NdhO) in NDH-1L and NDH-1M complexes of Synechocystis sp. PCC 6803.</title>
        <authorList>
            <person name="Battchikova N."/>
            <person name="Zhang P."/>
            <person name="Rudd S."/>
            <person name="Ogawa T."/>
            <person name="Aro E.-M."/>
        </authorList>
    </citation>
    <scope>IDENTIFICATION BY MASS SPECTROMETRY</scope>
    <scope>CHARACTERIZATION AS A MEMBER OF THE NAD(P)H-QUINONE OXIDOREDUCTASE COMPLEX</scope>
    <scope>SUBCOMPLEXES OF NDH-1</scope>
</reference>
<protein>
    <recommendedName>
        <fullName>NAD(P)H-quinone oxidoreductase subunit 3</fullName>
        <ecNumber>7.1.1.-</ecNumber>
    </recommendedName>
    <alternativeName>
        <fullName>NAD(P)H dehydrogenase subunit 3</fullName>
    </alternativeName>
    <alternativeName>
        <fullName>NADH-plastoquinone oxidoreductase subunit 3</fullName>
    </alternativeName>
    <alternativeName>
        <fullName>NDH-1 subunit 3</fullName>
        <shortName>NDH-C</shortName>
    </alternativeName>
</protein>